<reference key="1">
    <citation type="journal article" date="1994" name="Oncogene">
        <title>Identification of a human cDNA encoding a novel protein kinase with two repeats of the LIM/double zinc finger motif.</title>
        <authorList>
            <person name="Mizuno K."/>
            <person name="Okano I."/>
            <person name="Ohashi K."/>
            <person name="Nunoue K."/>
            <person name="Kuma K."/>
            <person name="Miyata T."/>
            <person name="Nakamura T."/>
        </authorList>
    </citation>
    <scope>NUCLEOTIDE SEQUENCE [MRNA] (ISOFORM 1)</scope>
</reference>
<reference key="2">
    <citation type="journal article" date="1996" name="Cell">
        <title>LIM-kinase1 hemizygosity implicated in impaired visuospatial constructive cognition.</title>
        <authorList>
            <person name="Frangiskakis J.M."/>
            <person name="Ewart A.K."/>
            <person name="Morris C.A."/>
            <person name="Mervis C.B."/>
            <person name="Bertrand J."/>
            <person name="Robinson B.F."/>
            <person name="Klein B.P."/>
            <person name="Ensing G.J."/>
            <person name="Everett L.A."/>
            <person name="Green E.D."/>
            <person name="Proeschel C."/>
            <person name="Gutowski N.J."/>
            <person name="Noble M."/>
            <person name="Atkinson D.L."/>
            <person name="Odelberg S.J."/>
            <person name="Keating M.T."/>
        </authorList>
    </citation>
    <scope>NUCLEOTIDE SEQUENCE [GENOMIC DNA] (ISOFORMS 1 AND 2)</scope>
    <scope>VARIANT TYR-580</scope>
    <source>
        <tissue>Hippocampus</tissue>
        <tissue>Placenta</tissue>
    </source>
</reference>
<reference key="3">
    <citation type="journal article" date="1996" name="Genomics">
        <title>Identification of genes from a 500-kb region at 7q11.23 that is commonly deleted in Williams syndrome patients.</title>
        <authorList>
            <person name="Osborne L.R."/>
            <person name="Martindale D.W."/>
            <person name="Scherer S.W."/>
            <person name="Shi X.-M."/>
            <person name="Huizenga J."/>
            <person name="Heng H.H.Q."/>
            <person name="Costa T."/>
            <person name="Pober B."/>
            <person name="Lew L."/>
            <person name="Brinkman J."/>
            <person name="Rommens J."/>
            <person name="Koop B.F."/>
            <person name="Tsui L.-C."/>
        </authorList>
    </citation>
    <scope>NUCLEOTIDE SEQUENCE [GENOMIC DNA]</scope>
    <scope>VARIANT TYR-580</scope>
    <scope>GENE DELETION IN WILLIAMS-BEUREN SYNDROME</scope>
</reference>
<reference key="4">
    <citation type="journal article" date="1999" name="J. Biol. Chem.">
        <title>Structural features of LIM kinase that control effects on the actin cytoskeleton.</title>
        <authorList>
            <person name="Edwards D.C."/>
            <person name="Gill G.N."/>
        </authorList>
    </citation>
    <scope>NUCLEOTIDE SEQUENCE [MRNA] (ISOFORM 3)</scope>
    <scope>FUNCTION</scope>
    <scope>SELF-ASSOCIATION</scope>
    <scope>SUBCELLULAR LOCATION</scope>
    <scope>MUTAGENESIS OF CYS-84; 177-GLY-LEU-178; ASP-460; 496-ARG--ARG-506; 503-ARG--GLY-505 AND THR-508</scope>
    <source>
        <tissue>Epidermal carcinoma</tissue>
    </source>
</reference>
<reference key="5">
    <citation type="journal article" date="2004" name="Nat. Genet.">
        <title>Complete sequencing and characterization of 21,243 full-length human cDNAs.</title>
        <authorList>
            <person name="Ota T."/>
            <person name="Suzuki Y."/>
            <person name="Nishikawa T."/>
            <person name="Otsuki T."/>
            <person name="Sugiyama T."/>
            <person name="Irie R."/>
            <person name="Wakamatsu A."/>
            <person name="Hayashi K."/>
            <person name="Sato H."/>
            <person name="Nagai K."/>
            <person name="Kimura K."/>
            <person name="Makita H."/>
            <person name="Sekine M."/>
            <person name="Obayashi M."/>
            <person name="Nishi T."/>
            <person name="Shibahara T."/>
            <person name="Tanaka T."/>
            <person name="Ishii S."/>
            <person name="Yamamoto J."/>
            <person name="Saito K."/>
            <person name="Kawai Y."/>
            <person name="Isono Y."/>
            <person name="Nakamura Y."/>
            <person name="Nagahari K."/>
            <person name="Murakami K."/>
            <person name="Yasuda T."/>
            <person name="Iwayanagi T."/>
            <person name="Wagatsuma M."/>
            <person name="Shiratori A."/>
            <person name="Sudo H."/>
            <person name="Hosoiri T."/>
            <person name="Kaku Y."/>
            <person name="Kodaira H."/>
            <person name="Kondo H."/>
            <person name="Sugawara M."/>
            <person name="Takahashi M."/>
            <person name="Kanda K."/>
            <person name="Yokoi T."/>
            <person name="Furuya T."/>
            <person name="Kikkawa E."/>
            <person name="Omura Y."/>
            <person name="Abe K."/>
            <person name="Kamihara K."/>
            <person name="Katsuta N."/>
            <person name="Sato K."/>
            <person name="Tanikawa M."/>
            <person name="Yamazaki M."/>
            <person name="Ninomiya K."/>
            <person name="Ishibashi T."/>
            <person name="Yamashita H."/>
            <person name="Murakawa K."/>
            <person name="Fujimori K."/>
            <person name="Tanai H."/>
            <person name="Kimata M."/>
            <person name="Watanabe M."/>
            <person name="Hiraoka S."/>
            <person name="Chiba Y."/>
            <person name="Ishida S."/>
            <person name="Ono Y."/>
            <person name="Takiguchi S."/>
            <person name="Watanabe S."/>
            <person name="Yosida M."/>
            <person name="Hotuta T."/>
            <person name="Kusano J."/>
            <person name="Kanehori K."/>
            <person name="Takahashi-Fujii A."/>
            <person name="Hara H."/>
            <person name="Tanase T.-O."/>
            <person name="Nomura Y."/>
            <person name="Togiya S."/>
            <person name="Komai F."/>
            <person name="Hara R."/>
            <person name="Takeuchi K."/>
            <person name="Arita M."/>
            <person name="Imose N."/>
            <person name="Musashino K."/>
            <person name="Yuuki H."/>
            <person name="Oshima A."/>
            <person name="Sasaki N."/>
            <person name="Aotsuka S."/>
            <person name="Yoshikawa Y."/>
            <person name="Matsunawa H."/>
            <person name="Ichihara T."/>
            <person name="Shiohata N."/>
            <person name="Sano S."/>
            <person name="Moriya S."/>
            <person name="Momiyama H."/>
            <person name="Satoh N."/>
            <person name="Takami S."/>
            <person name="Terashima Y."/>
            <person name="Suzuki O."/>
            <person name="Nakagawa S."/>
            <person name="Senoh A."/>
            <person name="Mizoguchi H."/>
            <person name="Goto Y."/>
            <person name="Shimizu F."/>
            <person name="Wakebe H."/>
            <person name="Hishigaki H."/>
            <person name="Watanabe T."/>
            <person name="Sugiyama A."/>
            <person name="Takemoto M."/>
            <person name="Kawakami B."/>
            <person name="Yamazaki M."/>
            <person name="Watanabe K."/>
            <person name="Kumagai A."/>
            <person name="Itakura S."/>
            <person name="Fukuzumi Y."/>
            <person name="Fujimori Y."/>
            <person name="Komiyama M."/>
            <person name="Tashiro H."/>
            <person name="Tanigami A."/>
            <person name="Fujiwara T."/>
            <person name="Ono T."/>
            <person name="Yamada K."/>
            <person name="Fujii Y."/>
            <person name="Ozaki K."/>
            <person name="Hirao M."/>
            <person name="Ohmori Y."/>
            <person name="Kawabata A."/>
            <person name="Hikiji T."/>
            <person name="Kobatake N."/>
            <person name="Inagaki H."/>
            <person name="Ikema Y."/>
            <person name="Okamoto S."/>
            <person name="Okitani R."/>
            <person name="Kawakami T."/>
            <person name="Noguchi S."/>
            <person name="Itoh T."/>
            <person name="Shigeta K."/>
            <person name="Senba T."/>
            <person name="Matsumura K."/>
            <person name="Nakajima Y."/>
            <person name="Mizuno T."/>
            <person name="Morinaga M."/>
            <person name="Sasaki M."/>
            <person name="Togashi T."/>
            <person name="Oyama M."/>
            <person name="Hata H."/>
            <person name="Watanabe M."/>
            <person name="Komatsu T."/>
            <person name="Mizushima-Sugano J."/>
            <person name="Satoh T."/>
            <person name="Shirai Y."/>
            <person name="Takahashi Y."/>
            <person name="Nakagawa K."/>
            <person name="Okumura K."/>
            <person name="Nagase T."/>
            <person name="Nomura N."/>
            <person name="Kikuchi H."/>
            <person name="Masuho Y."/>
            <person name="Yamashita R."/>
            <person name="Nakai K."/>
            <person name="Yada T."/>
            <person name="Nakamura Y."/>
            <person name="Ohara O."/>
            <person name="Isogai T."/>
            <person name="Sugano S."/>
        </authorList>
    </citation>
    <scope>NUCLEOTIDE SEQUENCE [LARGE SCALE MRNA] (ISOFORM 4)</scope>
    <source>
        <tissue>Placenta</tissue>
    </source>
</reference>
<reference key="6">
    <citation type="journal article" date="2003" name="Nature">
        <title>The DNA sequence of human chromosome 7.</title>
        <authorList>
            <person name="Hillier L.W."/>
            <person name="Fulton R.S."/>
            <person name="Fulton L.A."/>
            <person name="Graves T.A."/>
            <person name="Pepin K.H."/>
            <person name="Wagner-McPherson C."/>
            <person name="Layman D."/>
            <person name="Maas J."/>
            <person name="Jaeger S."/>
            <person name="Walker R."/>
            <person name="Wylie K."/>
            <person name="Sekhon M."/>
            <person name="Becker M.C."/>
            <person name="O'Laughlin M.D."/>
            <person name="Schaller M.E."/>
            <person name="Fewell G.A."/>
            <person name="Delehaunty K.D."/>
            <person name="Miner T.L."/>
            <person name="Nash W.E."/>
            <person name="Cordes M."/>
            <person name="Du H."/>
            <person name="Sun H."/>
            <person name="Edwards J."/>
            <person name="Bradshaw-Cordum H."/>
            <person name="Ali J."/>
            <person name="Andrews S."/>
            <person name="Isak A."/>
            <person name="Vanbrunt A."/>
            <person name="Nguyen C."/>
            <person name="Du F."/>
            <person name="Lamar B."/>
            <person name="Courtney L."/>
            <person name="Kalicki J."/>
            <person name="Ozersky P."/>
            <person name="Bielicki L."/>
            <person name="Scott K."/>
            <person name="Holmes A."/>
            <person name="Harkins R."/>
            <person name="Harris A."/>
            <person name="Strong C.M."/>
            <person name="Hou S."/>
            <person name="Tomlinson C."/>
            <person name="Dauphin-Kohlberg S."/>
            <person name="Kozlowicz-Reilly A."/>
            <person name="Leonard S."/>
            <person name="Rohlfing T."/>
            <person name="Rock S.M."/>
            <person name="Tin-Wollam A.-M."/>
            <person name="Abbott A."/>
            <person name="Minx P."/>
            <person name="Maupin R."/>
            <person name="Strowmatt C."/>
            <person name="Latreille P."/>
            <person name="Miller N."/>
            <person name="Johnson D."/>
            <person name="Murray J."/>
            <person name="Woessner J.P."/>
            <person name="Wendl M.C."/>
            <person name="Yang S.-P."/>
            <person name="Schultz B.R."/>
            <person name="Wallis J.W."/>
            <person name="Spieth J."/>
            <person name="Bieri T.A."/>
            <person name="Nelson J.O."/>
            <person name="Berkowicz N."/>
            <person name="Wohldmann P.E."/>
            <person name="Cook L.L."/>
            <person name="Hickenbotham M.T."/>
            <person name="Eldred J."/>
            <person name="Williams D."/>
            <person name="Bedell J.A."/>
            <person name="Mardis E.R."/>
            <person name="Clifton S.W."/>
            <person name="Chissoe S.L."/>
            <person name="Marra M.A."/>
            <person name="Raymond C."/>
            <person name="Haugen E."/>
            <person name="Gillett W."/>
            <person name="Zhou Y."/>
            <person name="James R."/>
            <person name="Phelps K."/>
            <person name="Iadanoto S."/>
            <person name="Bubb K."/>
            <person name="Simms E."/>
            <person name="Levy R."/>
            <person name="Clendenning J."/>
            <person name="Kaul R."/>
            <person name="Kent W.J."/>
            <person name="Furey T.S."/>
            <person name="Baertsch R.A."/>
            <person name="Brent M.R."/>
            <person name="Keibler E."/>
            <person name="Flicek P."/>
            <person name="Bork P."/>
            <person name="Suyama M."/>
            <person name="Bailey J.A."/>
            <person name="Portnoy M.E."/>
            <person name="Torrents D."/>
            <person name="Chinwalla A.T."/>
            <person name="Gish W.R."/>
            <person name="Eddy S.R."/>
            <person name="McPherson J.D."/>
            <person name="Olson M.V."/>
            <person name="Eichler E.E."/>
            <person name="Green E.D."/>
            <person name="Waterston R.H."/>
            <person name="Wilson R.K."/>
        </authorList>
    </citation>
    <scope>NUCLEOTIDE SEQUENCE [LARGE SCALE GENOMIC DNA]</scope>
</reference>
<reference key="7">
    <citation type="submission" date="2005-09" db="EMBL/GenBank/DDBJ databases">
        <authorList>
            <person name="Mural R.J."/>
            <person name="Istrail S."/>
            <person name="Sutton G.G."/>
            <person name="Florea L."/>
            <person name="Halpern A.L."/>
            <person name="Mobarry C.M."/>
            <person name="Lippert R."/>
            <person name="Walenz B."/>
            <person name="Shatkay H."/>
            <person name="Dew I."/>
            <person name="Miller J.R."/>
            <person name="Flanigan M.J."/>
            <person name="Edwards N.J."/>
            <person name="Bolanos R."/>
            <person name="Fasulo D."/>
            <person name="Halldorsson B.V."/>
            <person name="Hannenhalli S."/>
            <person name="Turner R."/>
            <person name="Yooseph S."/>
            <person name="Lu F."/>
            <person name="Nusskern D.R."/>
            <person name="Shue B.C."/>
            <person name="Zheng X.H."/>
            <person name="Zhong F."/>
            <person name="Delcher A.L."/>
            <person name="Huson D.H."/>
            <person name="Kravitz S.A."/>
            <person name="Mouchard L."/>
            <person name="Reinert K."/>
            <person name="Remington K.A."/>
            <person name="Clark A.G."/>
            <person name="Waterman M.S."/>
            <person name="Eichler E.E."/>
            <person name="Adams M.D."/>
            <person name="Hunkapiller M.W."/>
            <person name="Myers E.W."/>
            <person name="Venter J.C."/>
        </authorList>
    </citation>
    <scope>NUCLEOTIDE SEQUENCE [LARGE SCALE GENOMIC DNA]</scope>
</reference>
<reference key="8">
    <citation type="journal article" date="1999" name="Nat. Cell Biol.">
        <title>Activation of LIM-kinase by Pak1 couples Rac/Cdc42 GTPase signalling to actin cytoskeletal dynamics.</title>
        <authorList>
            <person name="Edwards D.C."/>
            <person name="Sanders L.C."/>
            <person name="Bokoch G.M."/>
            <person name="Gill G.N."/>
        </authorList>
    </citation>
    <scope>PHOSPHORYLATION AT THR-508 BY PAK1</scope>
</reference>
<reference key="9">
    <citation type="journal article" date="1999" name="Science">
        <title>Signaling from Rho to the actin cytoskeleton through protein kinases ROCK and LIM-kinase.</title>
        <authorList>
            <person name="Maekawa M."/>
            <person name="Ishizaki T."/>
            <person name="Boku S."/>
            <person name="Watanabe N."/>
            <person name="Fujita A."/>
            <person name="Iwamatsu A."/>
            <person name="Obinata T."/>
            <person name="Ohashi K."/>
            <person name="Mizuno K."/>
            <person name="Narumiya S."/>
        </authorList>
    </citation>
    <scope>FUNCTION</scope>
    <scope>INTERACTION WITH ROCK1</scope>
</reference>
<reference key="10">
    <citation type="journal article" date="2000" name="J. Biol. Chem.">
        <title>Rho-associated kinase ROCK activates LIM-kinase 1 by phosphorylation at threonine 508 within the activation loop.</title>
        <authorList>
            <person name="Ohashi K."/>
            <person name="Nagata K."/>
            <person name="Maekawa M."/>
            <person name="Ishizaki T."/>
            <person name="Narumiya S."/>
            <person name="Mizuno K."/>
        </authorList>
    </citation>
    <scope>PHOSPHORYLATION AT THR-508</scope>
    <scope>MUTAGENESIS OF THR-508</scope>
    <scope>INTERACTION WITH ROCK1</scope>
</reference>
<reference key="11">
    <citation type="journal article" date="2001" name="J. Biol. Chem.">
        <title>Activation of LIM kinases by myotonic dystrophy kinase-related Cdc42-binding kinase alpha.</title>
        <authorList>
            <person name="Sumi T."/>
            <person name="Matsumoto K."/>
            <person name="Shibuya A."/>
            <person name="Nakamura T."/>
        </authorList>
    </citation>
    <scope>PHOSPHORYLATION BY CDC42BP</scope>
</reference>
<reference key="12">
    <citation type="journal article" date="2001" name="J. Biol. Chem.">
        <title>Cytoskeletal changes regulated by the PAK4 serine/threonine kinase are mediated by LIM kinase 1 and cofilin.</title>
        <authorList>
            <person name="Dan C."/>
            <person name="Kelly A."/>
            <person name="Bernard O."/>
            <person name="Minden A."/>
        </authorList>
    </citation>
    <scope>PHOSPHORYLATION BY PAK4</scope>
</reference>
<reference key="13">
    <citation type="journal article" date="2002" name="Cell">
        <title>Control of actin reorganization by Slingshot, a family of phosphatases that dephosphorylate ADF/cofilin.</title>
        <authorList>
            <person name="Niwa R."/>
            <person name="Nagata-Ohashi K."/>
            <person name="Takeichi M."/>
            <person name="Mizuno K."/>
            <person name="Uemura T."/>
        </authorList>
    </citation>
    <scope>FUNCTION</scope>
</reference>
<reference key="14">
    <citation type="journal article" date="2003" name="J. Biol. Chem.">
        <title>Cell cycle-associated changes in Slingshot phosphatase activity and roles in cytokinesis in animal cells.</title>
        <authorList>
            <person name="Kaji N."/>
            <person name="Ohashi K."/>
            <person name="Shuin M."/>
            <person name="Niwa R."/>
            <person name="Uemura T."/>
            <person name="Mizuno K."/>
        </authorList>
    </citation>
    <scope>FUNCTION</scope>
</reference>
<reference key="15">
    <citation type="journal article" date="2003" name="J. Biol. Chem.">
        <title>p57Kip2 regulates actin dynamics by binding and translocating LIM-kinase 1 to the nucleus.</title>
        <authorList>
            <person name="Yokoo T."/>
            <person name="Toyoshima H."/>
            <person name="Miura M."/>
            <person name="Wang Y."/>
            <person name="Iida K.T."/>
            <person name="Suzuki H."/>
            <person name="Sone H."/>
            <person name="Shimano H."/>
            <person name="Gotoda T."/>
            <person name="Nishimori S."/>
            <person name="Tanaka K."/>
            <person name="Yamada N."/>
        </authorList>
    </citation>
    <scope>INTERACTION WITH CDKN1C</scope>
</reference>
<reference key="16">
    <citation type="journal article" date="2004" name="Genome Biol.">
        <title>An unappreciated role for RNA surveillance.</title>
        <authorList>
            <person name="Hillman R.T."/>
            <person name="Green R.E."/>
            <person name="Brenner S.E."/>
        </authorList>
    </citation>
    <scope>SPLICE ISOFORM(S) THAT ARE POTENTIAL NMD TARGET(S)</scope>
</reference>
<reference key="17">
    <citation type="journal article" date="2005" name="EMBO J.">
        <title>Interplay between components of a novel LIM kinase-slingshot phosphatase complex regulates cofilin.</title>
        <authorList>
            <person name="Soosairajah J."/>
            <person name="Maiti S."/>
            <person name="Wiggan O."/>
            <person name="Sarmiere P."/>
            <person name="Moussi N."/>
            <person name="Sarcevic B."/>
            <person name="Sampath R."/>
            <person name="Bamburg J.R."/>
            <person name="Bernard O."/>
        </authorList>
    </citation>
    <scope>FUNCTION</scope>
    <scope>INTERACTION WITH SSH1</scope>
    <scope>PHOSPHORYLATION AT THR-508</scope>
    <scope>DEPHOSPHORYLATION</scope>
</reference>
<reference key="18">
    <citation type="journal article" date="2005" name="J. Cell Biol.">
        <title>Spatial and temporal regulation of cofilin activity by LIM kinase and Slingshot is critical for directional cell migration.</title>
        <authorList>
            <person name="Nishita M."/>
            <person name="Tomizawa C."/>
            <person name="Yamamoto M."/>
            <person name="Horita Y."/>
            <person name="Ohashi K."/>
            <person name="Mizuno K."/>
        </authorList>
    </citation>
    <scope>FUNCTION</scope>
    <scope>SUBCELLULAR LOCATION</scope>
</reference>
<reference key="19">
    <citation type="journal article" date="2006" name="EMBO J.">
        <title>MAPKAPK-2-mediated LIM-kinase activation is critical for VEGF-induced actin remodeling and cell migration.</title>
        <authorList>
            <person name="Kobayashi M."/>
            <person name="Nishita M."/>
            <person name="Mishima T."/>
            <person name="Ohashi K."/>
            <person name="Mizuno K."/>
        </authorList>
    </citation>
    <scope>PHOSPHORYLATION AT SER-323 BY MAPKAPK2</scope>
</reference>
<reference key="20">
    <citation type="journal article" date="2006" name="FASEB J.">
        <title>Hsp90 increases LIM kinase activity by promoting its homo-dimerization.</title>
        <authorList>
            <person name="Li R."/>
            <person name="Soosairajah J."/>
            <person name="Harari D."/>
            <person name="Citri A."/>
            <person name="Price J."/>
            <person name="Ng H.L."/>
            <person name="Morton C.J."/>
            <person name="Parker M.W."/>
            <person name="Yarden Y."/>
            <person name="Bernard O."/>
        </authorList>
    </citation>
    <scope>INTERACTION WITH HSP90AA1</scope>
</reference>
<reference key="21">
    <citation type="journal article" date="2007" name="Exp. Cell Res.">
        <title>The phosphorylation of p25/TPPP by LIM kinase 1 inhibits its ability to assemble microtubules.</title>
        <authorList>
            <person name="Acevedo K."/>
            <person name="Li R."/>
            <person name="Soo P."/>
            <person name="Suryadinata R."/>
            <person name="Sarcevic B."/>
            <person name="Valova V.A."/>
            <person name="Graham M.E."/>
            <person name="Robinson P.J."/>
            <person name="Bernard O."/>
        </authorList>
    </citation>
    <scope>FUNCTION IN PHOSPHORYLATION OF TPPP</scope>
</reference>
<reference key="22">
    <citation type="journal article" date="2007" name="Int. J. Biochem. Cell Biol.">
        <title>Lim kinases, regulators of actin dynamics.</title>
        <authorList>
            <person name="Bernard O."/>
        </authorList>
    </citation>
    <scope>REVIEW ON FUNCTION</scope>
</reference>
<reference key="23">
    <citation type="journal article" date="2008" name="Mol. Cell">
        <title>Kinase-selective enrichment enables quantitative phosphoproteomics of the kinome across the cell cycle.</title>
        <authorList>
            <person name="Daub H."/>
            <person name="Olsen J.V."/>
            <person name="Bairlein M."/>
            <person name="Gnad F."/>
            <person name="Oppermann F.S."/>
            <person name="Korner R."/>
            <person name="Greff Z."/>
            <person name="Keri G."/>
            <person name="Stemmann O."/>
            <person name="Mann M."/>
        </authorList>
    </citation>
    <scope>PHOSPHORYLATION [LARGE SCALE ANALYSIS] AT SER-210; THR-229; SER-310 AND SER-337</scope>
    <scope>IDENTIFICATION BY MASS SPECTROMETRY [LARGE SCALE ANALYSIS]</scope>
    <source>
        <tissue>Cervix carcinoma</tissue>
    </source>
</reference>
<reference key="24">
    <citation type="journal article" date="2008" name="Proc. Natl. Acad. Sci. U.S.A.">
        <title>A quantitative atlas of mitotic phosphorylation.</title>
        <authorList>
            <person name="Dephoure N."/>
            <person name="Zhou C."/>
            <person name="Villen J."/>
            <person name="Beausoleil S.A."/>
            <person name="Bakalarski C.E."/>
            <person name="Elledge S.J."/>
            <person name="Gygi S.P."/>
        </authorList>
    </citation>
    <scope>PHOSPHORYLATION [LARGE SCALE ANALYSIS] AT SER-307 AND SER-310</scope>
    <scope>IDENTIFICATION BY MASS SPECTROMETRY [LARGE SCALE ANALYSIS]</scope>
    <source>
        <tissue>Cervix carcinoma</tissue>
    </source>
</reference>
<reference key="25">
    <citation type="journal article" date="2009" name="Anal. Chem.">
        <title>Lys-N and trypsin cover complementary parts of the phosphoproteome in a refined SCX-based approach.</title>
        <authorList>
            <person name="Gauci S."/>
            <person name="Helbig A.O."/>
            <person name="Slijper M."/>
            <person name="Krijgsveld J."/>
            <person name="Heck A.J."/>
            <person name="Mohammed S."/>
        </authorList>
    </citation>
    <scope>IDENTIFICATION BY MASS SPECTROMETRY [LARGE SCALE ANALYSIS]</scope>
</reference>
<reference key="26">
    <citation type="journal article" date="2009" name="Mol. Cell. Proteomics">
        <title>Large-scale proteomics analysis of the human kinome.</title>
        <authorList>
            <person name="Oppermann F.S."/>
            <person name="Gnad F."/>
            <person name="Olsen J.V."/>
            <person name="Hornberger R."/>
            <person name="Greff Z."/>
            <person name="Keri G."/>
            <person name="Mann M."/>
            <person name="Daub H."/>
        </authorList>
    </citation>
    <scope>PHOSPHORYLATION [LARGE SCALE ANALYSIS] AT SER-210; THR-229; SER-302 AND SER-310</scope>
    <scope>IDENTIFICATION BY MASS SPECTROMETRY [LARGE SCALE ANALYSIS]</scope>
</reference>
<reference key="27">
    <citation type="journal article" date="2012" name="Med. Res. Rev.">
        <title>LIM kinases are attractive targets with many macromolecular partners and only a few small molecule regulators.</title>
        <authorList>
            <person name="Manetti F."/>
        </authorList>
    </citation>
    <scope>REVIEW ON FUNCTION</scope>
</reference>
<reference key="28">
    <citation type="journal article" date="2011" name="Mol. Cancer">
        <title>Nuclear and cytoplasmic LIMK1 enhances human breast cancer progression.</title>
        <authorList>
            <person name="McConnell B.V."/>
            <person name="Koto K."/>
            <person name="Gutierrez-Hartmann A."/>
        </authorList>
    </citation>
    <scope>SUBCELLULAR LOCATION</scope>
</reference>
<reference key="29">
    <citation type="journal article" date="2012" name="J. Cell Sci.">
        <title>TPPP acts downstream of RhoA-ROCK-LIMK2 to regulate astral microtubule organization and spindle orientation.</title>
        <authorList>
            <person name="Heng Y.W."/>
            <person name="Lim H.H."/>
            <person name="Mina T."/>
            <person name="Utomo P."/>
            <person name="Zhong S."/>
            <person name="Lim C.T."/>
            <person name="Koh C.G."/>
        </authorList>
    </citation>
    <scope>FUNCTION</scope>
    <scope>CATALYTIC ACTIVITY</scope>
    <scope>MUTAGENESIS OF ASP-460 AND THR-508</scope>
</reference>
<reference key="30">
    <citation type="journal article" date="2013" name="J. Proteome Res.">
        <title>Toward a comprehensive characterization of a human cancer cell phosphoproteome.</title>
        <authorList>
            <person name="Zhou H."/>
            <person name="Di Palma S."/>
            <person name="Preisinger C."/>
            <person name="Peng M."/>
            <person name="Polat A.N."/>
            <person name="Heck A.J."/>
            <person name="Mohammed S."/>
        </authorList>
    </citation>
    <scope>PHOSPHORYLATION [LARGE SCALE ANALYSIS] AT SER-298 AND SER-310</scope>
    <scope>IDENTIFICATION BY MASS SPECTROMETRY [LARGE SCALE ANALYSIS]</scope>
    <source>
        <tissue>Cervix carcinoma</tissue>
        <tissue>Erythroleukemia</tissue>
    </source>
</reference>
<reference key="31">
    <citation type="journal article" date="2013" name="Sci. Signal.">
        <title>Beta-arrestin-dependent activation of the cofilin pathway is required for the scavenging activity of the atypical chemokine receptor D6.</title>
        <authorList>
            <person name="Borroni E.M."/>
            <person name="Cancellieri C."/>
            <person name="Vacchini A."/>
            <person name="Benureau Y."/>
            <person name="Lagane B."/>
            <person name="Bachelerie F."/>
            <person name="Arenzana-Seisdedos F."/>
            <person name="Mizuno K."/>
            <person name="Mantovani A."/>
            <person name="Bonecchi R."/>
            <person name="Locati M."/>
        </authorList>
    </citation>
    <scope>FUNCTION</scope>
    <scope>PHOSPHORYLATION AT THR-508</scope>
</reference>
<reference key="32">
    <citation type="journal article" date="2007" name="Nature">
        <title>Patterns of somatic mutation in human cancer genomes.</title>
        <authorList>
            <person name="Greenman C."/>
            <person name="Stephens P."/>
            <person name="Smith R."/>
            <person name="Dalgliesh G.L."/>
            <person name="Hunter C."/>
            <person name="Bignell G."/>
            <person name="Davies H."/>
            <person name="Teague J."/>
            <person name="Butler A."/>
            <person name="Stevens C."/>
            <person name="Edkins S."/>
            <person name="O'Meara S."/>
            <person name="Vastrik I."/>
            <person name="Schmidt E.E."/>
            <person name="Avis T."/>
            <person name="Barthorpe S."/>
            <person name="Bhamra G."/>
            <person name="Buck G."/>
            <person name="Choudhury B."/>
            <person name="Clements J."/>
            <person name="Cole J."/>
            <person name="Dicks E."/>
            <person name="Forbes S."/>
            <person name="Gray K."/>
            <person name="Halliday K."/>
            <person name="Harrison R."/>
            <person name="Hills K."/>
            <person name="Hinton J."/>
            <person name="Jenkinson A."/>
            <person name="Jones D."/>
            <person name="Menzies A."/>
            <person name="Mironenko T."/>
            <person name="Perry J."/>
            <person name="Raine K."/>
            <person name="Richardson D."/>
            <person name="Shepherd R."/>
            <person name="Small A."/>
            <person name="Tofts C."/>
            <person name="Varian J."/>
            <person name="Webb T."/>
            <person name="West S."/>
            <person name="Widaa S."/>
            <person name="Yates A."/>
            <person name="Cahill D.P."/>
            <person name="Louis D.N."/>
            <person name="Goldstraw P."/>
            <person name="Nicholson A.G."/>
            <person name="Brasseur F."/>
            <person name="Looijenga L."/>
            <person name="Weber B.L."/>
            <person name="Chiew Y.-E."/>
            <person name="DeFazio A."/>
            <person name="Greaves M.F."/>
            <person name="Green A.R."/>
            <person name="Campbell P."/>
            <person name="Birney E."/>
            <person name="Easton D.F."/>
            <person name="Chenevix-Trench G."/>
            <person name="Tan M.-H."/>
            <person name="Khoo S.K."/>
            <person name="Teh B.T."/>
            <person name="Yuen S.T."/>
            <person name="Leung S.Y."/>
            <person name="Wooster R."/>
            <person name="Futreal P.A."/>
            <person name="Stratton M.R."/>
        </authorList>
    </citation>
    <scope>VARIANTS [LARGE SCALE ANALYSIS] ALA-190; ASN-247 AND GLN-422</scope>
</reference>
<reference key="33">
    <citation type="submission" date="2011-07" db="PDB data bank">
        <title>Crystal structure of the human limk1 kinase domain in complex with staurosporine.</title>
        <authorList>
            <consortium name="Structural genomics consortium (SGC)"/>
        </authorList>
    </citation>
    <scope>X-RAY CRYSTALLOGRAPHY (1.65 ANGSTROMS) OF 330-637</scope>
</reference>
<gene>
    <name type="primary">LIMK1</name>
    <name type="synonym">LIMK</name>
</gene>
<sequence length="647" mass="72585">MRLTLLCCTWREERMGEEGSELPVCASCGQRIYDGQYLQALNADWHADCFRCCDCSASLSHQYYEKDGQLFCKKDYWARYGESCHGCSEQITKGLVMVAGELKYHPECFICLTCGTFIGDGDTYTLVEHSKLYCGHCYYQTVVTPVIEQILPDSPGSHLPHTVTLVSIPASSHGKRGLSVSIDPPHGPPGCGTEHSHTVRVQGVDPGCMSPDVKNSIHVGDRILEINGTPIRNVPLDEIDLLIQETSRLLQLTLEHDPHDTLGHGLGPETSPLSSPAYTPSGEAGSSARQKPVLRSCSIDRSPGAGSLGSPASQRKDLGRSESLRVVCRPHRIFRPSDLIHGEVLGKGCFGQAIKVTHRETGEVMVMKELIRFDEETQRTFLKEVKVMRCLEHPNVLKFIGVLYKDKRLNFITEYIKGGTLRGIIKSMDSQYPWSQRVSFAKDIASGMAYLHSMNIIHRDLNSHNCLVRENKNVVVADFGLARLMVDEKTQPEGLRSLKKPDRKKRYTVVGNPYWMAPEMINGRSYDEKVDVFSFGIVLCEIIGRVNADPDYLPRTMDFGLNVRGFLDRYCPPNCPPSFFPITVRCCDLDPEKRPSFVKLEHWLETLRMHLAGHLPLGPQLEQLDRGFWETYRRGESGLPAHPEVPD</sequence>
<dbReference type="EC" id="2.7.11.1" evidence="23"/>
<dbReference type="EMBL" id="D26309">
    <property type="protein sequence ID" value="BAA05371.1"/>
    <property type="molecule type" value="mRNA"/>
</dbReference>
<dbReference type="EMBL" id="U62293">
    <property type="protein sequence ID" value="AAB17545.1"/>
    <property type="molecule type" value="Genomic_DNA"/>
</dbReference>
<dbReference type="EMBL" id="U62293">
    <property type="protein sequence ID" value="AAB17546.1"/>
    <property type="molecule type" value="Genomic_DNA"/>
</dbReference>
<dbReference type="EMBL" id="U63721">
    <property type="protein sequence ID" value="AAC13885.1"/>
    <property type="molecule type" value="Genomic_DNA"/>
</dbReference>
<dbReference type="EMBL" id="U63721">
    <property type="protein sequence ID" value="AAC13886.1"/>
    <property type="molecule type" value="Genomic_DNA"/>
</dbReference>
<dbReference type="EMBL" id="AF134379">
    <property type="protein sequence ID" value="AAD25742.1"/>
    <property type="molecule type" value="mRNA"/>
</dbReference>
<dbReference type="EMBL" id="AK300382">
    <property type="protein sequence ID" value="BAH13274.1"/>
    <property type="molecule type" value="mRNA"/>
</dbReference>
<dbReference type="EMBL" id="AC005056">
    <property type="status" value="NOT_ANNOTATED_CDS"/>
    <property type="molecule type" value="Genomic_DNA"/>
</dbReference>
<dbReference type="EMBL" id="AC005057">
    <property type="protein sequence ID" value="AAS07438.1"/>
    <property type="molecule type" value="Genomic_DNA"/>
</dbReference>
<dbReference type="EMBL" id="CH471200">
    <property type="protein sequence ID" value="EAW69620.1"/>
    <property type="molecule type" value="Genomic_DNA"/>
</dbReference>
<dbReference type="EMBL" id="CH471200">
    <property type="protein sequence ID" value="EAW69621.1"/>
    <property type="molecule type" value="Genomic_DNA"/>
</dbReference>
<dbReference type="EMBL" id="CH471200">
    <property type="protein sequence ID" value="EAW69622.1"/>
    <property type="molecule type" value="Genomic_DNA"/>
</dbReference>
<dbReference type="EMBL" id="CH471200">
    <property type="protein sequence ID" value="EAW69623.1"/>
    <property type="molecule type" value="Genomic_DNA"/>
</dbReference>
<dbReference type="CCDS" id="CCDS5563.1">
    <molecule id="P53667-1"/>
</dbReference>
<dbReference type="CCDS" id="CCDS56491.1">
    <molecule id="P53667-4"/>
</dbReference>
<dbReference type="PIR" id="JP0078">
    <property type="entry name" value="JP0078"/>
</dbReference>
<dbReference type="RefSeq" id="NP_001191355.1">
    <molecule id="P53667-4"/>
    <property type="nucleotide sequence ID" value="NM_001204426.2"/>
</dbReference>
<dbReference type="RefSeq" id="NP_002305.1">
    <molecule id="P53667-1"/>
    <property type="nucleotide sequence ID" value="NM_002314.4"/>
</dbReference>
<dbReference type="PDB" id="3S95">
    <property type="method" value="X-ray"/>
    <property type="resolution" value="1.65 A"/>
    <property type="chains" value="A/B=330-637"/>
</dbReference>
<dbReference type="PDB" id="5HVJ">
    <property type="method" value="X-ray"/>
    <property type="resolution" value="2.20 A"/>
    <property type="chains" value="A/B=329-638"/>
</dbReference>
<dbReference type="PDB" id="5HVK">
    <property type="method" value="X-ray"/>
    <property type="resolution" value="3.50 A"/>
    <property type="chains" value="A/C=329-638"/>
</dbReference>
<dbReference type="PDB" id="5L6W">
    <property type="method" value="X-ray"/>
    <property type="resolution" value="2.53 A"/>
    <property type="chains" value="L=330-637"/>
</dbReference>
<dbReference type="PDB" id="5NXC">
    <property type="method" value="X-ray"/>
    <property type="resolution" value="2.25 A"/>
    <property type="chains" value="L=330-637"/>
</dbReference>
<dbReference type="PDB" id="6WLY">
    <property type="method" value="X-ray"/>
    <property type="resolution" value="1.90 A"/>
    <property type="chains" value="B=503-512"/>
</dbReference>
<dbReference type="PDB" id="7ATS">
    <property type="method" value="X-ray"/>
    <property type="resolution" value="2.80 A"/>
    <property type="chains" value="A=330-637"/>
</dbReference>
<dbReference type="PDB" id="7ATU">
    <property type="method" value="X-ray"/>
    <property type="resolution" value="2.80 A"/>
    <property type="chains" value="A/B/C/D=330-637"/>
</dbReference>
<dbReference type="PDB" id="7B8W">
    <property type="method" value="X-ray"/>
    <property type="resolution" value="2.80 A"/>
    <property type="chains" value="A/B/C/D=330-637"/>
</dbReference>
<dbReference type="PDB" id="8AAU">
    <property type="method" value="X-ray"/>
    <property type="resolution" value="1.74 A"/>
    <property type="chains" value="L=330-637"/>
</dbReference>
<dbReference type="PDBsum" id="3S95"/>
<dbReference type="PDBsum" id="5HVJ"/>
<dbReference type="PDBsum" id="5HVK"/>
<dbReference type="PDBsum" id="5L6W"/>
<dbReference type="PDBsum" id="5NXC"/>
<dbReference type="PDBsum" id="6WLY"/>
<dbReference type="PDBsum" id="7ATS"/>
<dbReference type="PDBsum" id="7ATU"/>
<dbReference type="PDBsum" id="7B8W"/>
<dbReference type="PDBsum" id="8AAU"/>
<dbReference type="SMR" id="P53667"/>
<dbReference type="BioGRID" id="110172">
    <property type="interactions" value="86"/>
</dbReference>
<dbReference type="CORUM" id="P53667"/>
<dbReference type="DIP" id="DIP-31605N"/>
<dbReference type="FunCoup" id="P53667">
    <property type="interactions" value="1816"/>
</dbReference>
<dbReference type="IntAct" id="P53667">
    <property type="interactions" value="77"/>
</dbReference>
<dbReference type="MINT" id="P53667"/>
<dbReference type="STRING" id="9606.ENSP00000336740"/>
<dbReference type="BindingDB" id="P53667"/>
<dbReference type="ChEMBL" id="CHEMBL3836"/>
<dbReference type="DrugBank" id="DB08912">
    <property type="generic name" value="Dabrafenib"/>
</dbReference>
<dbReference type="DrugBank" id="DB11718">
    <property type="generic name" value="Encorafenib"/>
</dbReference>
<dbReference type="DrugBank" id="DB12010">
    <property type="generic name" value="Fostamatinib"/>
</dbReference>
<dbReference type="DrugCentral" id="P53667"/>
<dbReference type="GuidetoPHARMACOLOGY" id="2054"/>
<dbReference type="iPTMnet" id="P53667"/>
<dbReference type="PhosphoSitePlus" id="P53667"/>
<dbReference type="SwissPalm" id="P53667"/>
<dbReference type="BioMuta" id="LIMK1"/>
<dbReference type="DMDM" id="90185240"/>
<dbReference type="CPTAC" id="CPTAC-2911"/>
<dbReference type="CPTAC" id="CPTAC-2912"/>
<dbReference type="jPOST" id="P53667"/>
<dbReference type="MassIVE" id="P53667"/>
<dbReference type="PaxDb" id="9606-ENSP00000336740"/>
<dbReference type="PeptideAtlas" id="P53667"/>
<dbReference type="ProteomicsDB" id="56598">
    <molecule id="P53667-1"/>
</dbReference>
<dbReference type="ProteomicsDB" id="56599">
    <molecule id="P53667-2"/>
</dbReference>
<dbReference type="ProteomicsDB" id="56600">
    <molecule id="P53667-3"/>
</dbReference>
<dbReference type="ProteomicsDB" id="56601">
    <molecule id="P53667-4"/>
</dbReference>
<dbReference type="Pumba" id="P53667"/>
<dbReference type="Antibodypedia" id="14576">
    <property type="antibodies" value="1019 antibodies from 42 providers"/>
</dbReference>
<dbReference type="DNASU" id="3984"/>
<dbReference type="Ensembl" id="ENST00000336180.7">
    <molecule id="P53667-1"/>
    <property type="protein sequence ID" value="ENSP00000336740.2"/>
    <property type="gene ID" value="ENSG00000106683.15"/>
</dbReference>
<dbReference type="Ensembl" id="ENST00000435201.5">
    <molecule id="P53667-3"/>
    <property type="protein sequence ID" value="ENSP00000414606.1"/>
    <property type="gene ID" value="ENSG00000106683.15"/>
</dbReference>
<dbReference type="Ensembl" id="ENST00000538333.3">
    <molecule id="P53667-4"/>
    <property type="protein sequence ID" value="ENSP00000444452.1"/>
    <property type="gene ID" value="ENSG00000106683.15"/>
</dbReference>
<dbReference type="GeneID" id="3984"/>
<dbReference type="KEGG" id="hsa:3984"/>
<dbReference type="MANE-Select" id="ENST00000336180.7">
    <property type="protein sequence ID" value="ENSP00000336740.2"/>
    <property type="RefSeq nucleotide sequence ID" value="NM_002314.4"/>
    <property type="RefSeq protein sequence ID" value="NP_002305.1"/>
</dbReference>
<dbReference type="UCSC" id="uc003uaa.3">
    <molecule id="P53667-1"/>
    <property type="organism name" value="human"/>
</dbReference>
<dbReference type="AGR" id="HGNC:6613"/>
<dbReference type="CTD" id="3984"/>
<dbReference type="DisGeNET" id="3984"/>
<dbReference type="GeneCards" id="LIMK1"/>
<dbReference type="GeneReviews" id="LIMK1"/>
<dbReference type="HGNC" id="HGNC:6613">
    <property type="gene designation" value="LIMK1"/>
</dbReference>
<dbReference type="HPA" id="ENSG00000106683">
    <property type="expression patterns" value="Tissue enriched (brain)"/>
</dbReference>
<dbReference type="MalaCards" id="LIMK1"/>
<dbReference type="MIM" id="601329">
    <property type="type" value="gene"/>
</dbReference>
<dbReference type="neXtProt" id="NX_P53667"/>
<dbReference type="OpenTargets" id="ENSG00000106683"/>
<dbReference type="Orphanet" id="904">
    <property type="disease" value="Williams syndrome"/>
</dbReference>
<dbReference type="PharmGKB" id="PA30386"/>
<dbReference type="VEuPathDB" id="HostDB:ENSG00000106683"/>
<dbReference type="eggNOG" id="KOG1187">
    <property type="taxonomic scope" value="Eukaryota"/>
</dbReference>
<dbReference type="GeneTree" id="ENSGT00940000156345"/>
<dbReference type="HOGENOM" id="CLU_000288_7_23_1"/>
<dbReference type="InParanoid" id="P53667"/>
<dbReference type="OMA" id="QRICDGQ"/>
<dbReference type="OrthoDB" id="20134at2759"/>
<dbReference type="PAN-GO" id="P53667">
    <property type="GO annotations" value="6 GO annotations based on evolutionary models"/>
</dbReference>
<dbReference type="PhylomeDB" id="P53667"/>
<dbReference type="TreeFam" id="TF318014"/>
<dbReference type="BRENDA" id="2.7.11.1">
    <property type="organism ID" value="2681"/>
</dbReference>
<dbReference type="PathwayCommons" id="P53667"/>
<dbReference type="Reactome" id="R-HSA-2029482">
    <property type="pathway name" value="Regulation of actin dynamics for phagocytic cup formation"/>
</dbReference>
<dbReference type="Reactome" id="R-HSA-3928662">
    <property type="pathway name" value="EPHB-mediated forward signaling"/>
</dbReference>
<dbReference type="Reactome" id="R-HSA-399954">
    <property type="pathway name" value="Sema3A PAK dependent Axon repulsion"/>
</dbReference>
<dbReference type="Reactome" id="R-HSA-416572">
    <property type="pathway name" value="Sema4D induced cell migration and growth-cone collapse"/>
</dbReference>
<dbReference type="Reactome" id="R-HSA-5627117">
    <property type="pathway name" value="RHO GTPases Activate ROCKs"/>
</dbReference>
<dbReference type="Reactome" id="R-HSA-5627123">
    <property type="pathway name" value="RHO GTPases activate PAKs"/>
</dbReference>
<dbReference type="SignaLink" id="P53667"/>
<dbReference type="SIGNOR" id="P53667"/>
<dbReference type="BioGRID-ORCS" id="3984">
    <property type="hits" value="9 hits in 1184 CRISPR screens"/>
</dbReference>
<dbReference type="CD-CODE" id="8C2F96ED">
    <property type="entry name" value="Centrosome"/>
</dbReference>
<dbReference type="ChiTaRS" id="LIMK1">
    <property type="organism name" value="human"/>
</dbReference>
<dbReference type="EvolutionaryTrace" id="P53667"/>
<dbReference type="GeneWiki" id="LIMK1"/>
<dbReference type="GenomeRNAi" id="3984"/>
<dbReference type="Pharos" id="P53667">
    <property type="development level" value="Tchem"/>
</dbReference>
<dbReference type="PRO" id="PR:P53667"/>
<dbReference type="Proteomes" id="UP000005640">
    <property type="component" value="Chromosome 7"/>
</dbReference>
<dbReference type="RNAct" id="P53667">
    <property type="molecule type" value="protein"/>
</dbReference>
<dbReference type="Bgee" id="ENSG00000106683">
    <property type="expression patterns" value="Expressed in stromal cell of endometrium and 108 other cell types or tissues"/>
</dbReference>
<dbReference type="ExpressionAtlas" id="P53667">
    <property type="expression patterns" value="baseline and differential"/>
</dbReference>
<dbReference type="GO" id="GO:0005737">
    <property type="term" value="C:cytoplasm"/>
    <property type="evidence" value="ECO:0000314"/>
    <property type="project" value="BHF-UCL"/>
</dbReference>
<dbReference type="GO" id="GO:0005856">
    <property type="term" value="C:cytoskeleton"/>
    <property type="evidence" value="ECO:0007669"/>
    <property type="project" value="UniProtKB-SubCell"/>
</dbReference>
<dbReference type="GO" id="GO:0005829">
    <property type="term" value="C:cytosol"/>
    <property type="evidence" value="ECO:0000314"/>
    <property type="project" value="HPA"/>
</dbReference>
<dbReference type="GO" id="GO:0005925">
    <property type="term" value="C:focal adhesion"/>
    <property type="evidence" value="ECO:0007669"/>
    <property type="project" value="Ensembl"/>
</dbReference>
<dbReference type="GO" id="GO:0098978">
    <property type="term" value="C:glutamatergic synapse"/>
    <property type="evidence" value="ECO:0000314"/>
    <property type="project" value="SynGO"/>
</dbReference>
<dbReference type="GO" id="GO:0030027">
    <property type="term" value="C:lamellipodium"/>
    <property type="evidence" value="ECO:0000250"/>
    <property type="project" value="UniProtKB"/>
</dbReference>
<dbReference type="GO" id="GO:0001673">
    <property type="term" value="C:male germ cell nucleus"/>
    <property type="evidence" value="ECO:0007669"/>
    <property type="project" value="Ensembl"/>
</dbReference>
<dbReference type="GO" id="GO:0016020">
    <property type="term" value="C:membrane"/>
    <property type="evidence" value="ECO:0007669"/>
    <property type="project" value="Ensembl"/>
</dbReference>
<dbReference type="GO" id="GO:0043005">
    <property type="term" value="C:neuron projection"/>
    <property type="evidence" value="ECO:0000250"/>
    <property type="project" value="UniProtKB"/>
</dbReference>
<dbReference type="GO" id="GO:0016607">
    <property type="term" value="C:nuclear speck"/>
    <property type="evidence" value="ECO:0000314"/>
    <property type="project" value="HPA"/>
</dbReference>
<dbReference type="GO" id="GO:0005634">
    <property type="term" value="C:nucleus"/>
    <property type="evidence" value="ECO:0000318"/>
    <property type="project" value="GO_Central"/>
</dbReference>
<dbReference type="GO" id="GO:0098794">
    <property type="term" value="C:postsynapse"/>
    <property type="evidence" value="ECO:0000314"/>
    <property type="project" value="SynGO"/>
</dbReference>
<dbReference type="GO" id="GO:0005524">
    <property type="term" value="F:ATP binding"/>
    <property type="evidence" value="ECO:0007669"/>
    <property type="project" value="UniProtKB-KW"/>
</dbReference>
<dbReference type="GO" id="GO:0031072">
    <property type="term" value="F:heat shock protein binding"/>
    <property type="evidence" value="ECO:0000314"/>
    <property type="project" value="BHF-UCL"/>
</dbReference>
<dbReference type="GO" id="GO:0046872">
    <property type="term" value="F:metal ion binding"/>
    <property type="evidence" value="ECO:0007669"/>
    <property type="project" value="UniProtKB-KW"/>
</dbReference>
<dbReference type="GO" id="GO:0004672">
    <property type="term" value="F:protein kinase activity"/>
    <property type="evidence" value="ECO:0000303"/>
    <property type="project" value="ProtInc"/>
</dbReference>
<dbReference type="GO" id="GO:0106310">
    <property type="term" value="F:protein serine kinase activity"/>
    <property type="evidence" value="ECO:0007669"/>
    <property type="project" value="RHEA"/>
</dbReference>
<dbReference type="GO" id="GO:0004674">
    <property type="term" value="F:protein serine/threonine kinase activity"/>
    <property type="evidence" value="ECO:0000314"/>
    <property type="project" value="UniProtKB"/>
</dbReference>
<dbReference type="GO" id="GO:1990948">
    <property type="term" value="F:ubiquitin ligase inhibitor activity"/>
    <property type="evidence" value="ECO:0000314"/>
    <property type="project" value="BHF-UCL"/>
</dbReference>
<dbReference type="GO" id="GO:0031625">
    <property type="term" value="F:ubiquitin protein ligase binding"/>
    <property type="evidence" value="ECO:0000353"/>
    <property type="project" value="BHF-UCL"/>
</dbReference>
<dbReference type="GO" id="GO:0030036">
    <property type="term" value="P:actin cytoskeleton organization"/>
    <property type="evidence" value="ECO:0000318"/>
    <property type="project" value="GO_Central"/>
</dbReference>
<dbReference type="GO" id="GO:0048675">
    <property type="term" value="P:axon extension"/>
    <property type="evidence" value="ECO:0007669"/>
    <property type="project" value="Ensembl"/>
</dbReference>
<dbReference type="GO" id="GO:0038096">
    <property type="term" value="P:Fc-gamma receptor signaling pathway involved in phagocytosis"/>
    <property type="evidence" value="ECO:0000304"/>
    <property type="project" value="Reactome"/>
</dbReference>
<dbReference type="GO" id="GO:0007399">
    <property type="term" value="P:nervous system development"/>
    <property type="evidence" value="ECO:0000304"/>
    <property type="project" value="ProtInc"/>
</dbReference>
<dbReference type="GO" id="GO:0032233">
    <property type="term" value="P:positive regulation of actin filament bundle assembly"/>
    <property type="evidence" value="ECO:0000314"/>
    <property type="project" value="BHF-UCL"/>
</dbReference>
<dbReference type="GO" id="GO:0045773">
    <property type="term" value="P:positive regulation of axon extension"/>
    <property type="evidence" value="ECO:0000250"/>
    <property type="project" value="UniProtKB"/>
</dbReference>
<dbReference type="GO" id="GO:0051496">
    <property type="term" value="P:positive regulation of stress fiber assembly"/>
    <property type="evidence" value="ECO:0000318"/>
    <property type="project" value="GO_Central"/>
</dbReference>
<dbReference type="GO" id="GO:0006468">
    <property type="term" value="P:protein phosphorylation"/>
    <property type="evidence" value="ECO:0000314"/>
    <property type="project" value="UniProtKB"/>
</dbReference>
<dbReference type="GO" id="GO:0007266">
    <property type="term" value="P:Rho protein signal transduction"/>
    <property type="evidence" value="ECO:0000304"/>
    <property type="project" value="ProtInc"/>
</dbReference>
<dbReference type="GO" id="GO:0007165">
    <property type="term" value="P:signal transduction"/>
    <property type="evidence" value="ECO:0000304"/>
    <property type="project" value="ProtInc"/>
</dbReference>
<dbReference type="GO" id="GO:0043149">
    <property type="term" value="P:stress fiber assembly"/>
    <property type="evidence" value="ECO:0007669"/>
    <property type="project" value="Ensembl"/>
</dbReference>
<dbReference type="CDD" id="cd09462">
    <property type="entry name" value="LIM1_LIMK1"/>
    <property type="match status" value="1"/>
</dbReference>
<dbReference type="CDD" id="cd06754">
    <property type="entry name" value="PDZ_LIMK-like"/>
    <property type="match status" value="1"/>
</dbReference>
<dbReference type="CDD" id="cd14221">
    <property type="entry name" value="STKc_LIMK1"/>
    <property type="match status" value="1"/>
</dbReference>
<dbReference type="FunFam" id="1.10.510.10:FF:000282">
    <property type="entry name" value="LIM domain kinase 1"/>
    <property type="match status" value="1"/>
</dbReference>
<dbReference type="FunFam" id="2.10.110.10:FF:000082">
    <property type="entry name" value="LIM domain kinase 1"/>
    <property type="match status" value="1"/>
</dbReference>
<dbReference type="FunFam" id="2.10.110.10:FF:000083">
    <property type="entry name" value="LIM domain kinase 1"/>
    <property type="match status" value="1"/>
</dbReference>
<dbReference type="FunFam" id="2.30.42.10:FF:000101">
    <property type="entry name" value="LIM domain kinase 1"/>
    <property type="match status" value="1"/>
</dbReference>
<dbReference type="FunFam" id="3.30.200.20:FF:000038">
    <property type="entry name" value="LIM domain kinase 2"/>
    <property type="match status" value="1"/>
</dbReference>
<dbReference type="Gene3D" id="2.30.42.10">
    <property type="match status" value="1"/>
</dbReference>
<dbReference type="Gene3D" id="2.10.110.10">
    <property type="entry name" value="Cysteine Rich Protein"/>
    <property type="match status" value="2"/>
</dbReference>
<dbReference type="Gene3D" id="3.30.200.20">
    <property type="entry name" value="Phosphorylase Kinase, domain 1"/>
    <property type="match status" value="1"/>
</dbReference>
<dbReference type="Gene3D" id="1.10.510.10">
    <property type="entry name" value="Transferase(Phosphotransferase) domain 1"/>
    <property type="match status" value="1"/>
</dbReference>
<dbReference type="InterPro" id="IPR050940">
    <property type="entry name" value="Actin_reg-Ser/Thr_kinase"/>
</dbReference>
<dbReference type="InterPro" id="IPR011009">
    <property type="entry name" value="Kinase-like_dom_sf"/>
</dbReference>
<dbReference type="InterPro" id="IPR001478">
    <property type="entry name" value="PDZ"/>
</dbReference>
<dbReference type="InterPro" id="IPR036034">
    <property type="entry name" value="PDZ_sf"/>
</dbReference>
<dbReference type="InterPro" id="IPR000719">
    <property type="entry name" value="Prot_kinase_dom"/>
</dbReference>
<dbReference type="InterPro" id="IPR017441">
    <property type="entry name" value="Protein_kinase_ATP_BS"/>
</dbReference>
<dbReference type="InterPro" id="IPR001245">
    <property type="entry name" value="Ser-Thr/Tyr_kinase_cat_dom"/>
</dbReference>
<dbReference type="InterPro" id="IPR001781">
    <property type="entry name" value="Znf_LIM"/>
</dbReference>
<dbReference type="PANTHER" id="PTHR46485">
    <property type="entry name" value="LIM DOMAIN KINASE 1"/>
    <property type="match status" value="1"/>
</dbReference>
<dbReference type="PANTHER" id="PTHR46485:SF7">
    <property type="entry name" value="LIM DOMAIN KINASE 1"/>
    <property type="match status" value="1"/>
</dbReference>
<dbReference type="Pfam" id="PF00412">
    <property type="entry name" value="LIM"/>
    <property type="match status" value="2"/>
</dbReference>
<dbReference type="Pfam" id="PF00595">
    <property type="entry name" value="PDZ"/>
    <property type="match status" value="1"/>
</dbReference>
<dbReference type="Pfam" id="PF07714">
    <property type="entry name" value="PK_Tyr_Ser-Thr"/>
    <property type="match status" value="1"/>
</dbReference>
<dbReference type="PRINTS" id="PR00109">
    <property type="entry name" value="TYRKINASE"/>
</dbReference>
<dbReference type="SMART" id="SM00132">
    <property type="entry name" value="LIM"/>
    <property type="match status" value="2"/>
</dbReference>
<dbReference type="SMART" id="SM00228">
    <property type="entry name" value="PDZ"/>
    <property type="match status" value="1"/>
</dbReference>
<dbReference type="SUPFAM" id="SSF57716">
    <property type="entry name" value="Glucocorticoid receptor-like (DNA-binding domain)"/>
    <property type="match status" value="3"/>
</dbReference>
<dbReference type="SUPFAM" id="SSF50156">
    <property type="entry name" value="PDZ domain-like"/>
    <property type="match status" value="1"/>
</dbReference>
<dbReference type="SUPFAM" id="SSF56112">
    <property type="entry name" value="Protein kinase-like (PK-like)"/>
    <property type="match status" value="1"/>
</dbReference>
<dbReference type="PROSITE" id="PS00478">
    <property type="entry name" value="LIM_DOMAIN_1"/>
    <property type="match status" value="2"/>
</dbReference>
<dbReference type="PROSITE" id="PS50023">
    <property type="entry name" value="LIM_DOMAIN_2"/>
    <property type="match status" value="2"/>
</dbReference>
<dbReference type="PROSITE" id="PS50106">
    <property type="entry name" value="PDZ"/>
    <property type="match status" value="1"/>
</dbReference>
<dbReference type="PROSITE" id="PS00107">
    <property type="entry name" value="PROTEIN_KINASE_ATP"/>
    <property type="match status" value="1"/>
</dbReference>
<dbReference type="PROSITE" id="PS50011">
    <property type="entry name" value="PROTEIN_KINASE_DOM"/>
    <property type="match status" value="1"/>
</dbReference>
<protein>
    <recommendedName>
        <fullName>LIM domain kinase 1</fullName>
        <shortName>LIMK-1</shortName>
        <ecNumber evidence="23">2.7.11.1</ecNumber>
    </recommendedName>
</protein>
<accession>P53667</accession>
<accession>B7Z6I8</accession>
<accession>D3DXF4</accession>
<accession>D3DXF5</accession>
<accession>O15283</accession>
<accession>Q15820</accession>
<accession>Q15821</accession>
<accession>Q75MU3</accession>
<accession>Q9Y5Q1</accession>
<comment type="function">
    <text evidence="8 13 14 16 17 21 23 24">Serine/threonine-protein kinase that plays an essential role in the regulation of actin filament dynamics. Acts downstream of several Rho family GTPase signal transduction pathways (PubMed:10436159, PubMed:11832213, PubMed:12807904, PubMed:15660133, PubMed:16230460, PubMed:18028908, PubMed:22328514, PubMed:23633677). Activated by upstream kinases including ROCK1, PAK1 and PAK4, which phosphorylate LIMK1 on a threonine residue located in its activation loop (PubMed:10436159). LIMK1 subsequently phosphorylates and inactivates the actin binding/depolymerizing factors cofilin-1/CFL1, cofilin-2/CFL2 and destrin/DSTN, thereby preventing the cleavage of filamentous actin (F-actin), and stabilizing the actin cytoskeleton (PubMed:11832213, PubMed:15660133, PubMed:16230460, PubMed:23633677). In this way LIMK1 regulates several actin-dependent biological processes including cell motility, cell cycle progression, and differentiation (PubMed:11832213, PubMed:15660133, PubMed:16230460, PubMed:23633677). Phosphorylates TPPP on serine residues, thereby promoting microtubule disassembly (PubMed:18028908). Stimulates axonal outgrowth and may be involved in brain development (PubMed:18028908).</text>
</comment>
<comment type="function">
    <molecule>Isoform 3</molecule>
    <text evidence="7">Has a dominant negative effect on actin cytoskeletal changes. Required for atypical chemokine receptor ACKR2-induced phosphorylation of cofilin (CFL1).</text>
</comment>
<comment type="catalytic activity">
    <reaction evidence="23">
        <text>L-seryl-[protein] + ATP = O-phospho-L-seryl-[protein] + ADP + H(+)</text>
        <dbReference type="Rhea" id="RHEA:17989"/>
        <dbReference type="Rhea" id="RHEA-COMP:9863"/>
        <dbReference type="Rhea" id="RHEA-COMP:11604"/>
        <dbReference type="ChEBI" id="CHEBI:15378"/>
        <dbReference type="ChEBI" id="CHEBI:29999"/>
        <dbReference type="ChEBI" id="CHEBI:30616"/>
        <dbReference type="ChEBI" id="CHEBI:83421"/>
        <dbReference type="ChEBI" id="CHEBI:456216"/>
        <dbReference type="EC" id="2.7.11.1"/>
    </reaction>
    <physiologicalReaction direction="left-to-right" evidence="23">
        <dbReference type="Rhea" id="RHEA:17990"/>
    </physiologicalReaction>
</comment>
<comment type="catalytic activity">
    <reaction evidence="23">
        <text>L-threonyl-[protein] + ATP = O-phospho-L-threonyl-[protein] + ADP + H(+)</text>
        <dbReference type="Rhea" id="RHEA:46608"/>
        <dbReference type="Rhea" id="RHEA-COMP:11060"/>
        <dbReference type="Rhea" id="RHEA-COMP:11605"/>
        <dbReference type="ChEBI" id="CHEBI:15378"/>
        <dbReference type="ChEBI" id="CHEBI:30013"/>
        <dbReference type="ChEBI" id="CHEBI:30616"/>
        <dbReference type="ChEBI" id="CHEBI:61977"/>
        <dbReference type="ChEBI" id="CHEBI:456216"/>
        <dbReference type="EC" id="2.7.11.1"/>
    </reaction>
    <physiologicalReaction direction="left-to-right" evidence="23">
        <dbReference type="Rhea" id="RHEA:46609"/>
    </physiologicalReaction>
</comment>
<comment type="subunit">
    <text evidence="2 7 8 10 15 16 19">Interacts (via LIM domain) with the cytoplasmic domain of NRG1. Interacts with NISCH. Interacts with RLIM and RNF6 (By similarity). Self-associates to form homodimers (PubMed:10196227). Interacts with HSP90AA1; this interaction promotes LIMK1 dimerization and subsequent transphosphorylation (PubMed:16641196). Interacts with CDKN1C (PubMed:14530263). Interacts with SSH1 (PubMed:15660133). Interacts with ROCK1 (PubMed:10436159, PubMed:10652353). Interacts (via LIM zinc-binding domains) with FAM89B/LRAP25 (via LRR repeat). Forms a tripartite complex with CDC42BPA, CDC42BPB and FAM89B/LRAP25 (By similarity).</text>
</comment>
<comment type="interaction">
    <interactant intactId="EBI-444403">
        <id>P53667</id>
    </interactant>
    <interactant intactId="EBI-12030460">
        <id>Q8WYQ4-2</id>
        <label>C22orf15</label>
    </interactant>
    <organismsDiffer>false</organismsDiffer>
    <experiments>3</experiments>
</comment>
<comment type="interaction">
    <interactant intactId="EBI-444403">
        <id>P53667</id>
    </interactant>
    <interactant intactId="EBI-352733">
        <id>P23528</id>
        <label>CFL1</label>
    </interactant>
    <organismsDiffer>false</organismsDiffer>
    <experiments>3</experiments>
</comment>
<comment type="interaction">
    <interactant intactId="EBI-444403">
        <id>P53667</id>
    </interactant>
    <interactant intactId="EBI-3959804">
        <id>P57058</id>
        <label>HUNK</label>
    </interactant>
    <organismsDiffer>false</organismsDiffer>
    <experiments>2</experiments>
</comment>
<comment type="interaction">
    <interactant intactId="EBI-444403">
        <id>P53667</id>
    </interactant>
    <interactant intactId="EBI-444209">
        <id>O95835</id>
        <label>LATS1</label>
    </interactant>
    <organismsDiffer>false</organismsDiffer>
    <experiments>5</experiments>
</comment>
<comment type="interaction">
    <interactant intactId="EBI-444403">
        <id>P53667</id>
    </interactant>
    <interactant intactId="EBI-992788">
        <id>P50281</id>
        <label>MMP14</label>
    </interactant>
    <organismsDiffer>false</organismsDiffer>
    <experiments>4</experiments>
</comment>
<comment type="interaction">
    <interactant intactId="EBI-444403">
        <id>P53667</id>
    </interactant>
    <interactant intactId="EBI-1307">
        <id>Q13153</id>
        <label>PAK1</label>
    </interactant>
    <organismsDiffer>false</organismsDiffer>
    <experiments>5</experiments>
</comment>
<comment type="interaction">
    <interactant intactId="EBI-444403">
        <id>P53667</id>
    </interactant>
    <interactant intactId="EBI-1045887">
        <id>Q13177</id>
        <label>PAK2</label>
    </interactant>
    <organismsDiffer>false</organismsDiffer>
    <experiments>2</experiments>
</comment>
<comment type="interaction">
    <interactant intactId="EBI-444403">
        <id>P53667</id>
    </interactant>
    <interactant intactId="EBI-1222387">
        <id>Q8WYL5</id>
        <label>SSH1</label>
    </interactant>
    <organismsDiffer>false</organismsDiffer>
    <experiments>6</experiments>
</comment>
<comment type="interaction">
    <interactant intactId="EBI-444403">
        <id>P53667</id>
    </interactant>
    <interactant intactId="EBI-356498">
        <id>P62258</id>
        <label>YWHAE</label>
    </interactant>
    <organismsDiffer>false</organismsDiffer>
    <experiments>2</experiments>
</comment>
<comment type="interaction">
    <interactant intactId="EBI-444403">
        <id>P53667</id>
    </interactant>
    <interactant intactId="EBI-4303019">
        <id>P29066</id>
        <label>Arrb1</label>
    </interactant>
    <organismsDiffer>true</organismsDiffer>
    <experiments>2</experiments>
</comment>
<comment type="interaction">
    <interactant intactId="EBI-444403">
        <id>P53667</id>
    </interactant>
    <interactant intactId="EBI-1636616">
        <id>P29067</id>
        <label>Arrb2</label>
    </interactant>
    <organismsDiffer>true</organismsDiffer>
    <experiments>2</experiments>
</comment>
<comment type="interaction">
    <interactant intactId="EBI-444403">
        <id>P53667</id>
    </interactant>
    <interactant intactId="EBI-12598030">
        <id>P63319</id>
        <label>Prkcg</label>
    </interactant>
    <organismsDiffer>true</organismsDiffer>
    <experiments>3</experiments>
</comment>
<comment type="subcellular location">
    <subcellularLocation>
        <location evidence="22">Cytoplasm</location>
    </subcellularLocation>
    <subcellularLocation>
        <location evidence="22">Nucleus</location>
    </subcellularLocation>
    <subcellularLocation>
        <location evidence="7 17">Cytoplasm</location>
        <location evidence="7 17">Cytoskeleton</location>
    </subcellularLocation>
    <subcellularLocation>
        <location evidence="2">Cell projection</location>
        <location evidence="2">Lamellipodium</location>
    </subcellularLocation>
    <text evidence="2">Predominantly found in the cytoplasm. Localizes in the lamellipodium in a CDC42BPA, CDC42BPB and FAM89B/LRAP25-dependent manner.</text>
</comment>
<comment type="alternative products">
    <event type="alternative splicing"/>
    <isoform>
        <id>P53667-1</id>
        <name>1</name>
        <sequence type="displayed"/>
    </isoform>
    <isoform>
        <id>P53667-2</id>
        <name>2</name>
        <sequence type="described" ref="VSP_003125"/>
    </isoform>
    <isoform>
        <id>P53667-3</id>
        <name>3</name>
        <sequence type="described" ref="VSP_003126 VSP_003127"/>
    </isoform>
    <isoform>
        <id>P53667-4</id>
        <name>4</name>
        <sequence type="described" ref="VSP_043331"/>
    </isoform>
</comment>
<comment type="tissue specificity">
    <text>Highest expression in both adult and fetal nervous system. Detected ubiquitously throughout the different regions of adult brain, with highest levels in the cerebral cortex. Expressed to a lesser extent in heart and skeletal muscle.</text>
</comment>
<comment type="PTM">
    <text evidence="9 10 11 12 16 18 24">Autophosphorylated. Phosphorylated on Thr-508 by ROCK1 and PAK1, resulting in activation. Phosphorylated by PAK4 which increases the ability of LIMK1 to phosphorylate cofilin. Phosphorylated at Ser-323 by MAPKAPK2 during activation of VEGFA-induced signaling, which results in activation of LIMK1 and promotion of actin reorganization, cell migration, and tubule formation of endothelial cells. Dephosphorylated and inactivated by SSH1. Phosphorylated by CDC42BP.</text>
</comment>
<comment type="PTM">
    <text evidence="2">Ubiquitinated. 'Lys-48'-linked polyubiquitination by RNF6 leads to proteasomal degradation through the 26S proteasome, modulating LIMK1 levels in the growth cone and its effect on axonal outgrowth. Also polyubiquitinated by RLIM (By similarity).</text>
</comment>
<comment type="disease">
    <text>LIMK1 is located in the Williams-Beuren syndrome (WBS) critical region. WBS results from a hemizygous deletion of several genes on chromosome 7q11.23, thought to arise as a consequence of unequal crossing over between highly homologous low-copy repeat sequences flanking the deleted region.</text>
</comment>
<comment type="miscellaneous">
    <molecule>Isoform 3</molecule>
    <text evidence="29">May be produced at very low levels due to a premature stop codon in the mRNA, leading to nonsense-mediated mRNA decay.</text>
</comment>
<comment type="similarity">
    <text evidence="29">Belongs to the protein kinase superfamily. TKL Ser/Thr protein kinase family.</text>
</comment>
<comment type="online information" name="Atlas of Genetics and Cytogenetics in Oncology and Haematology">
    <link uri="https://atlasgeneticsoncology.org/gene/41159/LIMK1"/>
</comment>
<keyword id="KW-0002">3D-structure</keyword>
<keyword id="KW-0025">Alternative splicing</keyword>
<keyword id="KW-0067">ATP-binding</keyword>
<keyword id="KW-0966">Cell projection</keyword>
<keyword id="KW-0963">Cytoplasm</keyword>
<keyword id="KW-0206">Cytoskeleton</keyword>
<keyword id="KW-0418">Kinase</keyword>
<keyword id="KW-0440">LIM domain</keyword>
<keyword id="KW-0479">Metal-binding</keyword>
<keyword id="KW-0547">Nucleotide-binding</keyword>
<keyword id="KW-0539">Nucleus</keyword>
<keyword id="KW-0597">Phosphoprotein</keyword>
<keyword id="KW-1267">Proteomics identification</keyword>
<keyword id="KW-1185">Reference proteome</keyword>
<keyword id="KW-0677">Repeat</keyword>
<keyword id="KW-0723">Serine/threonine-protein kinase</keyword>
<keyword id="KW-0808">Transferase</keyword>
<keyword id="KW-0832">Ubl conjugation</keyword>
<keyword id="KW-0856">Williams-Beuren syndrome</keyword>
<keyword id="KW-0862">Zinc</keyword>
<evidence type="ECO:0000250" key="1"/>
<evidence type="ECO:0000250" key="2">
    <source>
        <dbReference type="UniProtKB" id="P53668"/>
    </source>
</evidence>
<evidence type="ECO:0000255" key="3">
    <source>
        <dbReference type="PROSITE-ProRule" id="PRU00125"/>
    </source>
</evidence>
<evidence type="ECO:0000255" key="4">
    <source>
        <dbReference type="PROSITE-ProRule" id="PRU00143"/>
    </source>
</evidence>
<evidence type="ECO:0000255" key="5">
    <source>
        <dbReference type="PROSITE-ProRule" id="PRU00159"/>
    </source>
</evidence>
<evidence type="ECO:0000256" key="6">
    <source>
        <dbReference type="SAM" id="MobiDB-lite"/>
    </source>
</evidence>
<evidence type="ECO:0000269" key="7">
    <source>
    </source>
</evidence>
<evidence type="ECO:0000269" key="8">
    <source>
    </source>
</evidence>
<evidence type="ECO:0000269" key="9">
    <source>
    </source>
</evidence>
<evidence type="ECO:0000269" key="10">
    <source>
    </source>
</evidence>
<evidence type="ECO:0000269" key="11">
    <source>
    </source>
</evidence>
<evidence type="ECO:0000269" key="12">
    <source>
    </source>
</evidence>
<evidence type="ECO:0000269" key="13">
    <source>
    </source>
</evidence>
<evidence type="ECO:0000269" key="14">
    <source>
    </source>
</evidence>
<evidence type="ECO:0000269" key="15">
    <source>
    </source>
</evidence>
<evidence type="ECO:0000269" key="16">
    <source>
    </source>
</evidence>
<evidence type="ECO:0000269" key="17">
    <source>
    </source>
</evidence>
<evidence type="ECO:0000269" key="18">
    <source>
    </source>
</evidence>
<evidence type="ECO:0000269" key="19">
    <source>
    </source>
</evidence>
<evidence type="ECO:0000269" key="20">
    <source>
    </source>
</evidence>
<evidence type="ECO:0000269" key="21">
    <source>
    </source>
</evidence>
<evidence type="ECO:0000269" key="22">
    <source>
    </source>
</evidence>
<evidence type="ECO:0000269" key="23">
    <source>
    </source>
</evidence>
<evidence type="ECO:0000269" key="24">
    <source>
    </source>
</evidence>
<evidence type="ECO:0000269" key="25">
    <source>
    </source>
</evidence>
<evidence type="ECO:0000269" key="26">
    <source>
    </source>
</evidence>
<evidence type="ECO:0000303" key="27">
    <source>
    </source>
</evidence>
<evidence type="ECO:0000303" key="28">
    <source>
    </source>
</evidence>
<evidence type="ECO:0000305" key="29"/>
<evidence type="ECO:0007744" key="30">
    <source>
    </source>
</evidence>
<evidence type="ECO:0007744" key="31">
    <source>
    </source>
</evidence>
<evidence type="ECO:0007744" key="32">
    <source>
    </source>
</evidence>
<evidence type="ECO:0007744" key="33">
    <source>
    </source>
</evidence>
<evidence type="ECO:0007829" key="34">
    <source>
        <dbReference type="PDB" id="3S95"/>
    </source>
</evidence>
<evidence type="ECO:0007829" key="35">
    <source>
        <dbReference type="PDB" id="7ATS"/>
    </source>
</evidence>
<evidence type="ECO:0007829" key="36">
    <source>
        <dbReference type="PDB" id="7B8W"/>
    </source>
</evidence>
<evidence type="ECO:0007829" key="37">
    <source>
        <dbReference type="PDB" id="8AAU"/>
    </source>
</evidence>
<organism>
    <name type="scientific">Homo sapiens</name>
    <name type="common">Human</name>
    <dbReference type="NCBI Taxonomy" id="9606"/>
    <lineage>
        <taxon>Eukaryota</taxon>
        <taxon>Metazoa</taxon>
        <taxon>Chordata</taxon>
        <taxon>Craniata</taxon>
        <taxon>Vertebrata</taxon>
        <taxon>Euteleostomi</taxon>
        <taxon>Mammalia</taxon>
        <taxon>Eutheria</taxon>
        <taxon>Euarchontoglires</taxon>
        <taxon>Primates</taxon>
        <taxon>Haplorrhini</taxon>
        <taxon>Catarrhini</taxon>
        <taxon>Hominidae</taxon>
        <taxon>Homo</taxon>
    </lineage>
</organism>
<name>LIMK1_HUMAN</name>
<proteinExistence type="evidence at protein level"/>
<feature type="chain" id="PRO_0000075803" description="LIM domain kinase 1">
    <location>
        <begin position="1"/>
        <end position="647"/>
    </location>
</feature>
<feature type="domain" description="LIM zinc-binding 1" evidence="3">
    <location>
        <begin position="25"/>
        <end position="75"/>
    </location>
</feature>
<feature type="domain" description="LIM zinc-binding 2" evidence="3">
    <location>
        <begin position="84"/>
        <end position="137"/>
    </location>
</feature>
<feature type="domain" description="PDZ" evidence="4">
    <location>
        <begin position="165"/>
        <end position="258"/>
    </location>
</feature>
<feature type="domain" description="Protein kinase" evidence="5">
    <location>
        <begin position="339"/>
        <end position="604"/>
    </location>
</feature>
<feature type="region of interest" description="Disordered" evidence="6">
    <location>
        <begin position="260"/>
        <end position="319"/>
    </location>
</feature>
<feature type="compositionally biased region" description="Low complexity" evidence="6">
    <location>
        <begin position="302"/>
        <end position="313"/>
    </location>
</feature>
<feature type="active site" evidence="1">
    <location>
        <position position="460"/>
    </location>
</feature>
<feature type="binding site" evidence="5">
    <location>
        <begin position="345"/>
        <end position="353"/>
    </location>
    <ligand>
        <name>ATP</name>
        <dbReference type="ChEBI" id="CHEBI:30616"/>
    </ligand>
</feature>
<feature type="binding site" evidence="5">
    <location>
        <position position="368"/>
    </location>
    <ligand>
        <name>ATP</name>
        <dbReference type="ChEBI" id="CHEBI:30616"/>
    </ligand>
</feature>
<feature type="modified residue" description="Phosphoserine" evidence="31 32">
    <location>
        <position position="210"/>
    </location>
</feature>
<feature type="modified residue" description="Phosphothreonine" evidence="31 32">
    <location>
        <position position="229"/>
    </location>
</feature>
<feature type="modified residue" description="Phosphoserine" evidence="33">
    <location>
        <position position="298"/>
    </location>
</feature>
<feature type="modified residue" description="Phosphoserine" evidence="32">
    <location>
        <position position="302"/>
    </location>
</feature>
<feature type="modified residue" description="Phosphoserine" evidence="30">
    <location>
        <position position="307"/>
    </location>
</feature>
<feature type="modified residue" description="Phosphoserine" evidence="30 31 32 33">
    <location>
        <position position="310"/>
    </location>
</feature>
<feature type="modified residue" description="Phosphoserine; by MAPKAPK2" evidence="18">
    <location>
        <position position="323"/>
    </location>
</feature>
<feature type="modified residue" description="Phosphoserine" evidence="31">
    <location>
        <position position="337"/>
    </location>
</feature>
<feature type="modified residue" description="Phosphothreonine; by ROCK1 and PAK1" evidence="9 10 16 24">
    <location>
        <position position="508"/>
    </location>
</feature>
<feature type="splice variant" id="VSP_043331" description="In isoform 4." evidence="28">
    <original>MRLTLLCCTWREERMGEEGSELPVCASCGQRIYDGQYLQALNADWHADCFR</original>
    <variation>MLLASAPRRRRFLQRAK</variation>
    <location>
        <begin position="1"/>
        <end position="51"/>
    </location>
</feature>
<feature type="splice variant" id="VSP_003125" description="In isoform 2." evidence="29">
    <location>
        <begin position="1"/>
        <end position="14"/>
    </location>
</feature>
<feature type="splice variant" id="VSP_003126" description="In isoform 3." evidence="27">
    <original>LRSCSIDRSPGA</original>
    <variation>FARTWVALSPSA</variation>
    <location>
        <begin position="294"/>
        <end position="305"/>
    </location>
</feature>
<feature type="splice variant" id="VSP_003127" description="In isoform 3." evidence="27">
    <location>
        <begin position="306"/>
        <end position="647"/>
    </location>
</feature>
<feature type="sequence variant" id="VAR_042246" description="In dbSNP:rs35827364." evidence="20">
    <original>G</original>
    <variation>A</variation>
    <location>
        <position position="190"/>
    </location>
</feature>
<feature type="sequence variant" id="VAR_042247" description="In dbSNP:rs55661242." evidence="20">
    <original>S</original>
    <variation>N</variation>
    <location>
        <position position="247"/>
    </location>
</feature>
<feature type="sequence variant" id="VAR_042248" description="In dbSNP:rs55679316." evidence="20">
    <original>R</original>
    <variation>Q</variation>
    <location>
        <position position="422"/>
    </location>
</feature>
<feature type="sequence variant" id="VAR_050148" description="In dbSNP:rs178412." evidence="25 26">
    <original>F</original>
    <variation>Y</variation>
    <location>
        <position position="580"/>
    </location>
</feature>
<feature type="mutagenesis site" description="Enhances actin aggregation." evidence="7">
    <original>C</original>
    <variation>S</variation>
    <location>
        <position position="84"/>
    </location>
</feature>
<feature type="mutagenesis site" description="Enhances actin aggregation." evidence="7">
    <original>GL</original>
    <variation>EA</variation>
    <location>
        <begin position="177"/>
        <end position="178"/>
    </location>
</feature>
<feature type="mutagenesis site" description="Abrogates kinase activity." evidence="7 23">
    <original>D</original>
    <variation>N</variation>
    <variation>A</variation>
    <location>
        <position position="460"/>
    </location>
</feature>
<feature type="mutagenesis site" description="Reduces actin aggregation." evidence="7">
    <location>
        <begin position="496"/>
        <end position="506"/>
    </location>
</feature>
<feature type="mutagenesis site" description="Abolishes kinase activity." evidence="7">
    <original>RKK</original>
    <variation>GAA</variation>
    <location>
        <begin position="503"/>
        <end position="505"/>
    </location>
</feature>
<feature type="mutagenesis site" description="Abolishes activation by ROCK1." evidence="7 10">
    <original>T</original>
    <variation>A</variation>
    <location>
        <position position="508"/>
    </location>
</feature>
<feature type="mutagenesis site" description="Phosphomimetic mutant; enhances kinase activity." evidence="23">
    <original>T</original>
    <variation>E</variation>
    <location>
        <position position="508"/>
    </location>
</feature>
<feature type="mutagenesis site" description="Enhances kinase activity." evidence="7 10">
    <original>T</original>
    <variation>EE</variation>
    <location>
        <position position="508"/>
    </location>
</feature>
<feature type="mutagenesis site" description="Reduces kinase activity." evidence="7 10">
    <original>T</original>
    <variation>V</variation>
    <location>
        <position position="508"/>
    </location>
</feature>
<feature type="strand" evidence="34">
    <location>
        <begin position="332"/>
        <end position="334"/>
    </location>
</feature>
<feature type="helix" evidence="34">
    <location>
        <begin position="336"/>
        <end position="338"/>
    </location>
</feature>
<feature type="strand" evidence="34">
    <location>
        <begin position="339"/>
        <end position="346"/>
    </location>
</feature>
<feature type="strand" evidence="34">
    <location>
        <begin position="349"/>
        <end position="358"/>
    </location>
</feature>
<feature type="turn" evidence="34">
    <location>
        <begin position="359"/>
        <end position="361"/>
    </location>
</feature>
<feature type="strand" evidence="34">
    <location>
        <begin position="364"/>
        <end position="371"/>
    </location>
</feature>
<feature type="helix" evidence="34">
    <location>
        <begin position="375"/>
        <end position="388"/>
    </location>
</feature>
<feature type="strand" evidence="34">
    <location>
        <begin position="399"/>
        <end position="405"/>
    </location>
</feature>
<feature type="strand" evidence="34">
    <location>
        <begin position="408"/>
        <end position="414"/>
    </location>
</feature>
<feature type="strand" evidence="37">
    <location>
        <begin position="418"/>
        <end position="420"/>
    </location>
</feature>
<feature type="helix" evidence="34">
    <location>
        <begin position="421"/>
        <end position="427"/>
    </location>
</feature>
<feature type="helix" evidence="34">
    <location>
        <begin position="434"/>
        <end position="453"/>
    </location>
</feature>
<feature type="strand" evidence="34">
    <location>
        <begin position="465"/>
        <end position="468"/>
    </location>
</feature>
<feature type="strand" evidence="35">
    <location>
        <begin position="470"/>
        <end position="472"/>
    </location>
</feature>
<feature type="strand" evidence="34">
    <location>
        <begin position="474"/>
        <end position="476"/>
    </location>
</feature>
<feature type="helix" evidence="34">
    <location>
        <begin position="513"/>
        <end position="515"/>
    </location>
</feature>
<feature type="helix" evidence="34">
    <location>
        <begin position="518"/>
        <end position="521"/>
    </location>
</feature>
<feature type="helix" evidence="34">
    <location>
        <begin position="529"/>
        <end position="544"/>
    </location>
</feature>
<feature type="turn" evidence="34">
    <location>
        <begin position="550"/>
        <end position="552"/>
    </location>
</feature>
<feature type="strand" evidence="34">
    <location>
        <begin position="559"/>
        <end position="561"/>
    </location>
</feature>
<feature type="helix" evidence="34">
    <location>
        <begin position="563"/>
        <end position="569"/>
    </location>
</feature>
<feature type="strand" evidence="36">
    <location>
        <begin position="573"/>
        <end position="575"/>
    </location>
</feature>
<feature type="helix" evidence="34">
    <location>
        <begin position="579"/>
        <end position="586"/>
    </location>
</feature>
<feature type="helix" evidence="34">
    <location>
        <begin position="591"/>
        <end position="593"/>
    </location>
</feature>
<feature type="helix" evidence="34">
    <location>
        <begin position="597"/>
        <end position="613"/>
    </location>
</feature>
<feature type="helix" evidence="34">
    <location>
        <begin position="618"/>
        <end position="634"/>
    </location>
</feature>